<accession>P0A7Q2</accession>
<accession>P07085</accession>
<accession>P78275</accession>
<organism>
    <name type="scientific">Escherichia coli O157:H7</name>
    <dbReference type="NCBI Taxonomy" id="83334"/>
    <lineage>
        <taxon>Bacteria</taxon>
        <taxon>Pseudomonadati</taxon>
        <taxon>Pseudomonadota</taxon>
        <taxon>Gammaproteobacteria</taxon>
        <taxon>Enterobacterales</taxon>
        <taxon>Enterobacteriaceae</taxon>
        <taxon>Escherichia</taxon>
    </lineage>
</organism>
<reference key="1">
    <citation type="journal article" date="2001" name="Nature">
        <title>Genome sequence of enterohaemorrhagic Escherichia coli O157:H7.</title>
        <authorList>
            <person name="Perna N.T."/>
            <person name="Plunkett G. III"/>
            <person name="Burland V."/>
            <person name="Mau B."/>
            <person name="Glasner J.D."/>
            <person name="Rose D.J."/>
            <person name="Mayhew G.F."/>
            <person name="Evans P.S."/>
            <person name="Gregor J."/>
            <person name="Kirkpatrick H.A."/>
            <person name="Posfai G."/>
            <person name="Hackett J."/>
            <person name="Klink S."/>
            <person name="Boutin A."/>
            <person name="Shao Y."/>
            <person name="Miller L."/>
            <person name="Grotbeck E.J."/>
            <person name="Davis N.W."/>
            <person name="Lim A."/>
            <person name="Dimalanta E.T."/>
            <person name="Potamousis K."/>
            <person name="Apodaca J."/>
            <person name="Anantharaman T.S."/>
            <person name="Lin J."/>
            <person name="Yen G."/>
            <person name="Schwartz D.C."/>
            <person name="Welch R.A."/>
            <person name="Blattner F.R."/>
        </authorList>
    </citation>
    <scope>NUCLEOTIDE SEQUENCE [LARGE SCALE GENOMIC DNA]</scope>
    <source>
        <strain>O157:H7 / EDL933 / ATCC 700927 / EHEC</strain>
    </source>
</reference>
<reference key="2">
    <citation type="journal article" date="2001" name="DNA Res.">
        <title>Complete genome sequence of enterohemorrhagic Escherichia coli O157:H7 and genomic comparison with a laboratory strain K-12.</title>
        <authorList>
            <person name="Hayashi T."/>
            <person name="Makino K."/>
            <person name="Ohnishi M."/>
            <person name="Kurokawa K."/>
            <person name="Ishii K."/>
            <person name="Yokoyama K."/>
            <person name="Han C.-G."/>
            <person name="Ohtsubo E."/>
            <person name="Nakayama K."/>
            <person name="Murata T."/>
            <person name="Tanaka M."/>
            <person name="Tobe T."/>
            <person name="Iida T."/>
            <person name="Takami H."/>
            <person name="Honda T."/>
            <person name="Sasakawa C."/>
            <person name="Ogasawara N."/>
            <person name="Yasunaga T."/>
            <person name="Kuhara S."/>
            <person name="Shiba T."/>
            <person name="Hattori M."/>
            <person name="Shinagawa H."/>
        </authorList>
    </citation>
    <scope>NUCLEOTIDE SEQUENCE [LARGE SCALE GENOMIC DNA]</scope>
    <source>
        <strain>O157:H7 / Sakai / RIMD 0509952 / EHEC</strain>
    </source>
</reference>
<name>RL35_ECO57</name>
<feature type="initiator methionine" description="Removed" evidence="1">
    <location>
        <position position="1"/>
    </location>
</feature>
<feature type="chain" id="PRO_0000177360" description="Large ribosomal subunit protein bL35">
    <location>
        <begin position="2"/>
        <end position="65"/>
    </location>
</feature>
<feature type="region of interest" description="Disordered" evidence="3">
    <location>
        <begin position="1"/>
        <end position="22"/>
    </location>
</feature>
<feature type="compositionally biased region" description="Basic residues" evidence="3">
    <location>
        <begin position="10"/>
        <end position="22"/>
    </location>
</feature>
<sequence>MPKIKTVRGAAKRFKKTGKGGFKHKHANLRHILTKKATKRKRHLRPKAMVSKGDLGLVIACLPYA</sequence>
<dbReference type="EMBL" id="AE005174">
    <property type="protein sequence ID" value="AAG56704.1"/>
    <property type="molecule type" value="Genomic_DNA"/>
</dbReference>
<dbReference type="EMBL" id="BA000007">
    <property type="protein sequence ID" value="BAB35847.1"/>
    <property type="molecule type" value="Genomic_DNA"/>
</dbReference>
<dbReference type="PIR" id="D85780">
    <property type="entry name" value="D85780"/>
</dbReference>
<dbReference type="PIR" id="H90931">
    <property type="entry name" value="H90931"/>
</dbReference>
<dbReference type="RefSeq" id="NP_310451.3">
    <property type="nucleotide sequence ID" value="NC_002695.1"/>
</dbReference>
<dbReference type="RefSeq" id="WP_001124225.1">
    <property type="nucleotide sequence ID" value="NZ_VOAI01000007.1"/>
</dbReference>
<dbReference type="EMDB" id="EMD-42504"/>
<dbReference type="SMR" id="P0A7Q2"/>
<dbReference type="STRING" id="155864.Z2746"/>
<dbReference type="GeneID" id="912347"/>
<dbReference type="GeneID" id="97601348"/>
<dbReference type="KEGG" id="ece:Z2746"/>
<dbReference type="KEGG" id="ecs:ECs_2424"/>
<dbReference type="PATRIC" id="fig|386585.9.peg.2537"/>
<dbReference type="eggNOG" id="COG0291">
    <property type="taxonomic scope" value="Bacteria"/>
</dbReference>
<dbReference type="HOGENOM" id="CLU_169643_1_1_6"/>
<dbReference type="OMA" id="PKIKTHR"/>
<dbReference type="Proteomes" id="UP000000558">
    <property type="component" value="Chromosome"/>
</dbReference>
<dbReference type="Proteomes" id="UP000002519">
    <property type="component" value="Chromosome"/>
</dbReference>
<dbReference type="GO" id="GO:0022625">
    <property type="term" value="C:cytosolic large ribosomal subunit"/>
    <property type="evidence" value="ECO:0007669"/>
    <property type="project" value="TreeGrafter"/>
</dbReference>
<dbReference type="GO" id="GO:0003735">
    <property type="term" value="F:structural constituent of ribosome"/>
    <property type="evidence" value="ECO:0007669"/>
    <property type="project" value="InterPro"/>
</dbReference>
<dbReference type="GO" id="GO:0006412">
    <property type="term" value="P:translation"/>
    <property type="evidence" value="ECO:0007669"/>
    <property type="project" value="UniProtKB-UniRule"/>
</dbReference>
<dbReference type="FunFam" id="4.10.410.60:FF:000001">
    <property type="entry name" value="50S ribosomal protein L35"/>
    <property type="match status" value="1"/>
</dbReference>
<dbReference type="Gene3D" id="4.10.410.60">
    <property type="match status" value="1"/>
</dbReference>
<dbReference type="HAMAP" id="MF_00514">
    <property type="entry name" value="Ribosomal_bL35"/>
    <property type="match status" value="1"/>
</dbReference>
<dbReference type="InterPro" id="IPR001706">
    <property type="entry name" value="Ribosomal_bL35"/>
</dbReference>
<dbReference type="InterPro" id="IPR021137">
    <property type="entry name" value="Ribosomal_bL35-like"/>
</dbReference>
<dbReference type="InterPro" id="IPR018265">
    <property type="entry name" value="Ribosomal_bL35_CS"/>
</dbReference>
<dbReference type="InterPro" id="IPR037229">
    <property type="entry name" value="Ribosomal_bL35_sf"/>
</dbReference>
<dbReference type="NCBIfam" id="TIGR00001">
    <property type="entry name" value="rpmI_bact"/>
    <property type="match status" value="1"/>
</dbReference>
<dbReference type="PANTHER" id="PTHR33343">
    <property type="entry name" value="54S RIBOSOMAL PROTEIN BL35M"/>
    <property type="match status" value="1"/>
</dbReference>
<dbReference type="PANTHER" id="PTHR33343:SF1">
    <property type="entry name" value="LARGE RIBOSOMAL SUBUNIT PROTEIN BL35M"/>
    <property type="match status" value="1"/>
</dbReference>
<dbReference type="Pfam" id="PF01632">
    <property type="entry name" value="Ribosomal_L35p"/>
    <property type="match status" value="1"/>
</dbReference>
<dbReference type="PRINTS" id="PR00064">
    <property type="entry name" value="RIBOSOMALL35"/>
</dbReference>
<dbReference type="SUPFAM" id="SSF143034">
    <property type="entry name" value="L35p-like"/>
    <property type="match status" value="1"/>
</dbReference>
<dbReference type="PROSITE" id="PS00936">
    <property type="entry name" value="RIBOSOMAL_L35"/>
    <property type="match status" value="1"/>
</dbReference>
<protein>
    <recommendedName>
        <fullName evidence="2">Large ribosomal subunit protein bL35</fullName>
    </recommendedName>
    <alternativeName>
        <fullName evidence="4">50S ribosomal protein L35</fullName>
    </alternativeName>
</protein>
<proteinExistence type="inferred from homology"/>
<gene>
    <name evidence="2" type="primary">rpmI</name>
    <name type="ordered locus">Z2746</name>
    <name type="ordered locus">ECs2424</name>
</gene>
<keyword id="KW-1185">Reference proteome</keyword>
<keyword id="KW-0687">Ribonucleoprotein</keyword>
<keyword id="KW-0689">Ribosomal protein</keyword>
<comment type="similarity">
    <text evidence="2">Belongs to the bacterial ribosomal protein bL35 family.</text>
</comment>
<evidence type="ECO:0000250" key="1"/>
<evidence type="ECO:0000255" key="2">
    <source>
        <dbReference type="HAMAP-Rule" id="MF_00514"/>
    </source>
</evidence>
<evidence type="ECO:0000256" key="3">
    <source>
        <dbReference type="SAM" id="MobiDB-lite"/>
    </source>
</evidence>
<evidence type="ECO:0000305" key="4"/>